<protein>
    <recommendedName>
        <fullName>Cytochrome b</fullName>
    </recommendedName>
    <alternativeName>
        <fullName>Complex III subunit 3</fullName>
    </alternativeName>
    <alternativeName>
        <fullName>Complex III subunit III</fullName>
    </alternativeName>
    <alternativeName>
        <fullName>Cytochrome b-c1 complex subunit 3</fullName>
    </alternativeName>
    <alternativeName>
        <fullName>Ubiquinol-cytochrome-c reductase complex cytochrome b subunit</fullName>
    </alternativeName>
</protein>
<dbReference type="EMBL" id="AF088921">
    <property type="protein sequence ID" value="AAD38431.1"/>
    <property type="molecule type" value="Genomic_DNA"/>
</dbReference>
<dbReference type="SMR" id="Q9XP87"/>
<dbReference type="GO" id="GO:0005743">
    <property type="term" value="C:mitochondrial inner membrane"/>
    <property type="evidence" value="ECO:0007669"/>
    <property type="project" value="UniProtKB-SubCell"/>
</dbReference>
<dbReference type="GO" id="GO:0045275">
    <property type="term" value="C:respiratory chain complex III"/>
    <property type="evidence" value="ECO:0007669"/>
    <property type="project" value="InterPro"/>
</dbReference>
<dbReference type="GO" id="GO:0046872">
    <property type="term" value="F:metal ion binding"/>
    <property type="evidence" value="ECO:0007669"/>
    <property type="project" value="UniProtKB-KW"/>
</dbReference>
<dbReference type="GO" id="GO:0008121">
    <property type="term" value="F:ubiquinol-cytochrome-c reductase activity"/>
    <property type="evidence" value="ECO:0007669"/>
    <property type="project" value="InterPro"/>
</dbReference>
<dbReference type="GO" id="GO:0006122">
    <property type="term" value="P:mitochondrial electron transport, ubiquinol to cytochrome c"/>
    <property type="evidence" value="ECO:0007669"/>
    <property type="project" value="TreeGrafter"/>
</dbReference>
<dbReference type="CDD" id="cd00290">
    <property type="entry name" value="cytochrome_b_C"/>
    <property type="match status" value="1"/>
</dbReference>
<dbReference type="CDD" id="cd00284">
    <property type="entry name" value="Cytochrome_b_N"/>
    <property type="match status" value="1"/>
</dbReference>
<dbReference type="FunFam" id="1.20.810.10:FF:000002">
    <property type="entry name" value="Cytochrome b"/>
    <property type="match status" value="1"/>
</dbReference>
<dbReference type="Gene3D" id="1.20.810.10">
    <property type="entry name" value="Cytochrome Bc1 Complex, Chain C"/>
    <property type="match status" value="1"/>
</dbReference>
<dbReference type="InterPro" id="IPR005798">
    <property type="entry name" value="Cyt_b/b6_C"/>
</dbReference>
<dbReference type="InterPro" id="IPR036150">
    <property type="entry name" value="Cyt_b/b6_C_sf"/>
</dbReference>
<dbReference type="InterPro" id="IPR005797">
    <property type="entry name" value="Cyt_b/b6_N"/>
</dbReference>
<dbReference type="InterPro" id="IPR027387">
    <property type="entry name" value="Cytb/b6-like_sf"/>
</dbReference>
<dbReference type="InterPro" id="IPR030689">
    <property type="entry name" value="Cytochrome_b"/>
</dbReference>
<dbReference type="InterPro" id="IPR048260">
    <property type="entry name" value="Cytochrome_b_C_euk/bac"/>
</dbReference>
<dbReference type="InterPro" id="IPR048259">
    <property type="entry name" value="Cytochrome_b_N_euk/bac"/>
</dbReference>
<dbReference type="InterPro" id="IPR016174">
    <property type="entry name" value="Di-haem_cyt_TM"/>
</dbReference>
<dbReference type="PANTHER" id="PTHR19271">
    <property type="entry name" value="CYTOCHROME B"/>
    <property type="match status" value="1"/>
</dbReference>
<dbReference type="PANTHER" id="PTHR19271:SF16">
    <property type="entry name" value="CYTOCHROME B"/>
    <property type="match status" value="1"/>
</dbReference>
<dbReference type="Pfam" id="PF00032">
    <property type="entry name" value="Cytochrom_B_C"/>
    <property type="match status" value="1"/>
</dbReference>
<dbReference type="Pfam" id="PF00033">
    <property type="entry name" value="Cytochrome_B"/>
    <property type="match status" value="1"/>
</dbReference>
<dbReference type="PIRSF" id="PIRSF038885">
    <property type="entry name" value="COB"/>
    <property type="match status" value="1"/>
</dbReference>
<dbReference type="SUPFAM" id="SSF81648">
    <property type="entry name" value="a domain/subunit of cytochrome bc1 complex (Ubiquinol-cytochrome c reductase)"/>
    <property type="match status" value="1"/>
</dbReference>
<dbReference type="SUPFAM" id="SSF81342">
    <property type="entry name" value="Transmembrane di-heme cytochromes"/>
    <property type="match status" value="1"/>
</dbReference>
<dbReference type="PROSITE" id="PS51003">
    <property type="entry name" value="CYTB_CTER"/>
    <property type="match status" value="1"/>
</dbReference>
<dbReference type="PROSITE" id="PS51002">
    <property type="entry name" value="CYTB_NTER"/>
    <property type="match status" value="1"/>
</dbReference>
<sequence length="381" mass="42762">MINLRKTHPLMKIINHSFIDLPAPSNISAWWNFGSLLGICLMIQILTGLFLAMHYTSDTLTAFSSVAHICRDVNYGWLIRNLHANGASMFFMCLFLHVGRGIYYGSYLYKETWNIGVIPLFTVMATAFAGYVPPWGQMSFWGATVITNLLSAIPYIGTTLAEWIWGGFSVDKATLTRFFAFHFILPFVIAALAIVHLLFLHETGSNNPSGLTLTADKIPFHPYYTIKDALGLTFLLLILLSLALFSPDSLGDPDNFSPANPLNTPPHIKPEWYFLFAYAILRSIPNKLGGVLALLASILTLLIIPYLHTANQRSMMFRPVSQTLFWILAANLMTLTWIGGQPVEQPFIIIGQLASILYFMPILMLMPLAGLFENYMLEPKW</sequence>
<accession>Q9XP87</accession>
<comment type="function">
    <text evidence="2">Component of the ubiquinol-cytochrome c reductase complex (complex III or cytochrome b-c1 complex) that is part of the mitochondrial respiratory chain. The b-c1 complex mediates electron transfer from ubiquinol to cytochrome c. Contributes to the generation of a proton gradient across the mitochondrial membrane that is then used for ATP synthesis.</text>
</comment>
<comment type="cofactor">
    <cofactor evidence="2">
        <name>heme b</name>
        <dbReference type="ChEBI" id="CHEBI:60344"/>
    </cofactor>
    <text evidence="2">Binds 2 heme b groups non-covalently.</text>
</comment>
<comment type="subunit">
    <text evidence="2">The cytochrome bc1 complex contains 11 subunits: 3 respiratory subunits (MT-CYB, CYC1 and UQCRFS1), 2 core proteins (UQCRC1 and UQCRC2) and 6 low-molecular weight proteins (UQCRH/QCR6, UQCRB/QCR7, UQCRQ/QCR8, UQCR10/QCR9, UQCR11/QCR10 and a cleavage product of UQCRFS1). This cytochrome bc1 complex then forms a dimer.</text>
</comment>
<comment type="subcellular location">
    <subcellularLocation>
        <location evidence="2">Mitochondrion inner membrane</location>
        <topology evidence="2">Multi-pass membrane protein</topology>
    </subcellularLocation>
</comment>
<comment type="miscellaneous">
    <text evidence="1">Heme 1 (or BL or b562) is low-potential and absorbs at about 562 nm, and heme 2 (or BH or b566) is high-potential and absorbs at about 566 nm.</text>
</comment>
<comment type="similarity">
    <text evidence="3 4">Belongs to the cytochrome b family.</text>
</comment>
<comment type="caution">
    <text evidence="2">The full-length protein contains only eight transmembrane helices, not nine as predicted by bioinformatics tools.</text>
</comment>
<reference key="1">
    <citation type="journal article" date="1999" name="Mol. Phylogenet. Evol.">
        <title>Systematic relationships within the dasyurid marsupial tribe Sminthopsini -- a multigene approach.</title>
        <authorList>
            <person name="Blacket M.J."/>
            <person name="Krajewski C."/>
            <person name="Labrinidis A."/>
            <person name="Cambron B."/>
            <person name="Cooper S."/>
            <person name="Westerman M."/>
        </authorList>
    </citation>
    <scope>NUCLEOTIDE SEQUENCE [GENOMIC DNA]</scope>
</reference>
<proteinExistence type="inferred from homology"/>
<evidence type="ECO:0000250" key="1"/>
<evidence type="ECO:0000250" key="2">
    <source>
        <dbReference type="UniProtKB" id="P00157"/>
    </source>
</evidence>
<evidence type="ECO:0000255" key="3">
    <source>
        <dbReference type="PROSITE-ProRule" id="PRU00967"/>
    </source>
</evidence>
<evidence type="ECO:0000255" key="4">
    <source>
        <dbReference type="PROSITE-ProRule" id="PRU00968"/>
    </source>
</evidence>
<feature type="chain" id="PRO_0000254858" description="Cytochrome b">
    <location>
        <begin position="1"/>
        <end position="381"/>
    </location>
</feature>
<feature type="transmembrane region" description="Helical" evidence="2">
    <location>
        <begin position="33"/>
        <end position="53"/>
    </location>
</feature>
<feature type="transmembrane region" description="Helical" evidence="2">
    <location>
        <begin position="77"/>
        <end position="98"/>
    </location>
</feature>
<feature type="transmembrane region" description="Helical" evidence="2">
    <location>
        <begin position="113"/>
        <end position="133"/>
    </location>
</feature>
<feature type="transmembrane region" description="Helical" evidence="2">
    <location>
        <begin position="178"/>
        <end position="198"/>
    </location>
</feature>
<feature type="transmembrane region" description="Helical" evidence="2">
    <location>
        <begin position="226"/>
        <end position="246"/>
    </location>
</feature>
<feature type="transmembrane region" description="Helical" evidence="2">
    <location>
        <begin position="288"/>
        <end position="308"/>
    </location>
</feature>
<feature type="transmembrane region" description="Helical" evidence="2">
    <location>
        <begin position="320"/>
        <end position="340"/>
    </location>
</feature>
<feature type="transmembrane region" description="Helical" evidence="2">
    <location>
        <begin position="347"/>
        <end position="367"/>
    </location>
</feature>
<feature type="binding site" description="axial binding residue" evidence="2">
    <location>
        <position position="83"/>
    </location>
    <ligand>
        <name>heme b</name>
        <dbReference type="ChEBI" id="CHEBI:60344"/>
        <label>b562</label>
    </ligand>
    <ligandPart>
        <name>Fe</name>
        <dbReference type="ChEBI" id="CHEBI:18248"/>
    </ligandPart>
</feature>
<feature type="binding site" description="axial binding residue" evidence="2">
    <location>
        <position position="97"/>
    </location>
    <ligand>
        <name>heme b</name>
        <dbReference type="ChEBI" id="CHEBI:60344"/>
        <label>b566</label>
    </ligand>
    <ligandPart>
        <name>Fe</name>
        <dbReference type="ChEBI" id="CHEBI:18248"/>
    </ligandPart>
</feature>
<feature type="binding site" description="axial binding residue" evidence="2">
    <location>
        <position position="182"/>
    </location>
    <ligand>
        <name>heme b</name>
        <dbReference type="ChEBI" id="CHEBI:60344"/>
        <label>b562</label>
    </ligand>
    <ligandPart>
        <name>Fe</name>
        <dbReference type="ChEBI" id="CHEBI:18248"/>
    </ligandPart>
</feature>
<feature type="binding site" description="axial binding residue" evidence="2">
    <location>
        <position position="196"/>
    </location>
    <ligand>
        <name>heme b</name>
        <dbReference type="ChEBI" id="CHEBI:60344"/>
        <label>b566</label>
    </ligand>
    <ligandPart>
        <name>Fe</name>
        <dbReference type="ChEBI" id="CHEBI:18248"/>
    </ligandPart>
</feature>
<feature type="binding site" evidence="2">
    <location>
        <position position="201"/>
    </location>
    <ligand>
        <name>a ubiquinone</name>
        <dbReference type="ChEBI" id="CHEBI:16389"/>
    </ligand>
</feature>
<keyword id="KW-0249">Electron transport</keyword>
<keyword id="KW-0349">Heme</keyword>
<keyword id="KW-0408">Iron</keyword>
<keyword id="KW-0472">Membrane</keyword>
<keyword id="KW-0479">Metal-binding</keyword>
<keyword id="KW-0496">Mitochondrion</keyword>
<keyword id="KW-0999">Mitochondrion inner membrane</keyword>
<keyword id="KW-0679">Respiratory chain</keyword>
<keyword id="KW-0812">Transmembrane</keyword>
<keyword id="KW-1133">Transmembrane helix</keyword>
<keyword id="KW-0813">Transport</keyword>
<keyword id="KW-0830">Ubiquinone</keyword>
<geneLocation type="mitochondrion"/>
<name>CYB_SMIBI</name>
<organism>
    <name type="scientific">Sminthopsis bindi</name>
    <name type="common">Kakadu dunnart</name>
    <dbReference type="NCBI Taxonomy" id="90757"/>
    <lineage>
        <taxon>Eukaryota</taxon>
        <taxon>Metazoa</taxon>
        <taxon>Chordata</taxon>
        <taxon>Craniata</taxon>
        <taxon>Vertebrata</taxon>
        <taxon>Euteleostomi</taxon>
        <taxon>Mammalia</taxon>
        <taxon>Metatheria</taxon>
        <taxon>Dasyuromorphia</taxon>
        <taxon>Dasyuridae</taxon>
        <taxon>Sminthopsis</taxon>
    </lineage>
</organism>
<gene>
    <name type="primary">MT-CYB</name>
    <name type="synonym">COB</name>
    <name type="synonym">CYTB</name>
    <name type="synonym">MTCYB</name>
</gene>